<dbReference type="EC" id="2.4.2.9" evidence="1"/>
<dbReference type="EMBL" id="AE016853">
    <property type="protein sequence ID" value="AAO58467.1"/>
    <property type="molecule type" value="Genomic_DNA"/>
</dbReference>
<dbReference type="RefSeq" id="NP_794772.1">
    <property type="nucleotide sequence ID" value="NC_004578.1"/>
</dbReference>
<dbReference type="RefSeq" id="WP_005736951.1">
    <property type="nucleotide sequence ID" value="NC_004578.1"/>
</dbReference>
<dbReference type="SMR" id="Q87VA0"/>
<dbReference type="STRING" id="223283.PSPTO_5039"/>
<dbReference type="GeneID" id="1186724"/>
<dbReference type="KEGG" id="pst:PSPTO_5039"/>
<dbReference type="PATRIC" id="fig|223283.9.peg.5158"/>
<dbReference type="eggNOG" id="COG2065">
    <property type="taxonomic scope" value="Bacteria"/>
</dbReference>
<dbReference type="HOGENOM" id="CLU_094234_1_1_6"/>
<dbReference type="OrthoDB" id="9802227at2"/>
<dbReference type="PhylomeDB" id="Q87VA0"/>
<dbReference type="Proteomes" id="UP000002515">
    <property type="component" value="Chromosome"/>
</dbReference>
<dbReference type="GO" id="GO:0004845">
    <property type="term" value="F:uracil phosphoribosyltransferase activity"/>
    <property type="evidence" value="ECO:0007669"/>
    <property type="project" value="UniProtKB-UniRule"/>
</dbReference>
<dbReference type="GO" id="GO:0006355">
    <property type="term" value="P:regulation of DNA-templated transcription"/>
    <property type="evidence" value="ECO:0007669"/>
    <property type="project" value="UniProtKB-UniRule"/>
</dbReference>
<dbReference type="CDD" id="cd06223">
    <property type="entry name" value="PRTases_typeI"/>
    <property type="match status" value="1"/>
</dbReference>
<dbReference type="Gene3D" id="3.40.50.2020">
    <property type="match status" value="1"/>
</dbReference>
<dbReference type="HAMAP" id="MF_01219">
    <property type="entry name" value="PyrR"/>
    <property type="match status" value="1"/>
</dbReference>
<dbReference type="InterPro" id="IPR000836">
    <property type="entry name" value="PRibTrfase_dom"/>
</dbReference>
<dbReference type="InterPro" id="IPR029057">
    <property type="entry name" value="PRTase-like"/>
</dbReference>
<dbReference type="InterPro" id="IPR023050">
    <property type="entry name" value="PyrR"/>
</dbReference>
<dbReference type="InterPro" id="IPR050137">
    <property type="entry name" value="PyrR_bifunctional"/>
</dbReference>
<dbReference type="NCBIfam" id="NF003545">
    <property type="entry name" value="PRK05205.1-1"/>
    <property type="match status" value="1"/>
</dbReference>
<dbReference type="PANTHER" id="PTHR11608">
    <property type="entry name" value="BIFUNCTIONAL PROTEIN PYRR"/>
    <property type="match status" value="1"/>
</dbReference>
<dbReference type="PANTHER" id="PTHR11608:SF0">
    <property type="entry name" value="BIFUNCTIONAL PROTEIN PYRR"/>
    <property type="match status" value="1"/>
</dbReference>
<dbReference type="Pfam" id="PF00156">
    <property type="entry name" value="Pribosyltran"/>
    <property type="match status" value="1"/>
</dbReference>
<dbReference type="SUPFAM" id="SSF53271">
    <property type="entry name" value="PRTase-like"/>
    <property type="match status" value="1"/>
</dbReference>
<protein>
    <recommendedName>
        <fullName evidence="1">Bifunctional protein PyrR</fullName>
    </recommendedName>
    <domain>
        <recommendedName>
            <fullName evidence="1">Pyrimidine operon regulatory protein</fullName>
        </recommendedName>
    </domain>
    <domain>
        <recommendedName>
            <fullName evidence="1">Uracil phosphoribosyltransferase</fullName>
            <shortName evidence="1">UPRTase</shortName>
            <ecNumber evidence="1">2.4.2.9</ecNumber>
        </recommendedName>
    </domain>
</protein>
<proteinExistence type="inferred from homology"/>
<reference key="1">
    <citation type="journal article" date="2003" name="Proc. Natl. Acad. Sci. U.S.A.">
        <title>The complete genome sequence of the Arabidopsis and tomato pathogen Pseudomonas syringae pv. tomato DC3000.</title>
        <authorList>
            <person name="Buell C.R."/>
            <person name="Joardar V."/>
            <person name="Lindeberg M."/>
            <person name="Selengut J."/>
            <person name="Paulsen I.T."/>
            <person name="Gwinn M.L."/>
            <person name="Dodson R.J."/>
            <person name="DeBoy R.T."/>
            <person name="Durkin A.S."/>
            <person name="Kolonay J.F."/>
            <person name="Madupu R."/>
            <person name="Daugherty S.C."/>
            <person name="Brinkac L.M."/>
            <person name="Beanan M.J."/>
            <person name="Haft D.H."/>
            <person name="Nelson W.C."/>
            <person name="Davidsen T.M."/>
            <person name="Zafar N."/>
            <person name="Zhou L."/>
            <person name="Liu J."/>
            <person name="Yuan Q."/>
            <person name="Khouri H.M."/>
            <person name="Fedorova N.B."/>
            <person name="Tran B."/>
            <person name="Russell D."/>
            <person name="Berry K.J."/>
            <person name="Utterback T.R."/>
            <person name="Van Aken S.E."/>
            <person name="Feldblyum T.V."/>
            <person name="D'Ascenzo M."/>
            <person name="Deng W.-L."/>
            <person name="Ramos A.R."/>
            <person name="Alfano J.R."/>
            <person name="Cartinhour S."/>
            <person name="Chatterjee A.K."/>
            <person name="Delaney T.P."/>
            <person name="Lazarowitz S.G."/>
            <person name="Martin G.B."/>
            <person name="Schneider D.J."/>
            <person name="Tang X."/>
            <person name="Bender C.L."/>
            <person name="White O."/>
            <person name="Fraser C.M."/>
            <person name="Collmer A."/>
        </authorList>
    </citation>
    <scope>NUCLEOTIDE SEQUENCE [LARGE SCALE GENOMIC DNA]</scope>
    <source>
        <strain>ATCC BAA-871 / DC3000</strain>
    </source>
</reference>
<name>PYRR_PSESM</name>
<gene>
    <name evidence="1" type="primary">pyrR</name>
    <name type="ordered locus">PSPTO_5039</name>
    <name type="ORF">PSPTO5039</name>
</gene>
<sequence>MSLPNPAELIRQMATDLNAHLSKRGISDPRFIGIRTGGVWVAQALLEALNNPSPLGTLDVSFYRDDFSQNGLHPQVRPSELPFEIEGQHLVLIDDVLMSGRTVRAALNELFDYGRPASVTLVCLLDLNAGELPIRPNVVGATLSLAPNERIKLSGPEPLALELQDLSTAL</sequence>
<comment type="function">
    <text evidence="1">Regulates the transcription of the pyrimidine nucleotide (pyr) operon in response to exogenous pyrimidines.</text>
</comment>
<comment type="function">
    <text evidence="1">Also displays a weak uracil phosphoribosyltransferase activity which is not physiologically significant.</text>
</comment>
<comment type="catalytic activity">
    <reaction evidence="1">
        <text>UMP + diphosphate = 5-phospho-alpha-D-ribose 1-diphosphate + uracil</text>
        <dbReference type="Rhea" id="RHEA:13017"/>
        <dbReference type="ChEBI" id="CHEBI:17568"/>
        <dbReference type="ChEBI" id="CHEBI:33019"/>
        <dbReference type="ChEBI" id="CHEBI:57865"/>
        <dbReference type="ChEBI" id="CHEBI:58017"/>
        <dbReference type="EC" id="2.4.2.9"/>
    </reaction>
</comment>
<comment type="similarity">
    <text evidence="1">Belongs to the purine/pyrimidine phosphoribosyltransferase family. PyrR subfamily.</text>
</comment>
<evidence type="ECO:0000255" key="1">
    <source>
        <dbReference type="HAMAP-Rule" id="MF_01219"/>
    </source>
</evidence>
<accession>Q87VA0</accession>
<feature type="chain" id="PRO_1000139207" description="Bifunctional protein PyrR">
    <location>
        <begin position="1"/>
        <end position="170"/>
    </location>
</feature>
<feature type="short sequence motif" description="PRPP-binding" evidence="1">
    <location>
        <begin position="90"/>
        <end position="102"/>
    </location>
</feature>
<keyword id="KW-0328">Glycosyltransferase</keyword>
<keyword id="KW-1185">Reference proteome</keyword>
<keyword id="KW-0804">Transcription</keyword>
<keyword id="KW-0805">Transcription regulation</keyword>
<keyword id="KW-0808">Transferase</keyword>
<organism>
    <name type="scientific">Pseudomonas syringae pv. tomato (strain ATCC BAA-871 / DC3000)</name>
    <dbReference type="NCBI Taxonomy" id="223283"/>
    <lineage>
        <taxon>Bacteria</taxon>
        <taxon>Pseudomonadati</taxon>
        <taxon>Pseudomonadota</taxon>
        <taxon>Gammaproteobacteria</taxon>
        <taxon>Pseudomonadales</taxon>
        <taxon>Pseudomonadaceae</taxon>
        <taxon>Pseudomonas</taxon>
    </lineage>
</organism>